<organism>
    <name type="scientific">Yersinia pseudotuberculosis serotype I (strain IP32953)</name>
    <dbReference type="NCBI Taxonomy" id="273123"/>
    <lineage>
        <taxon>Bacteria</taxon>
        <taxon>Pseudomonadati</taxon>
        <taxon>Pseudomonadota</taxon>
        <taxon>Gammaproteobacteria</taxon>
        <taxon>Enterobacterales</taxon>
        <taxon>Yersiniaceae</taxon>
        <taxon>Yersinia</taxon>
    </lineage>
</organism>
<reference key="1">
    <citation type="journal article" date="2004" name="Proc. Natl. Acad. Sci. U.S.A.">
        <title>Insights into the evolution of Yersinia pestis through whole-genome comparison with Yersinia pseudotuberculosis.</title>
        <authorList>
            <person name="Chain P.S.G."/>
            <person name="Carniel E."/>
            <person name="Larimer F.W."/>
            <person name="Lamerdin J."/>
            <person name="Stoutland P.O."/>
            <person name="Regala W.M."/>
            <person name="Georgescu A.M."/>
            <person name="Vergez L.M."/>
            <person name="Land M.L."/>
            <person name="Motin V.L."/>
            <person name="Brubaker R.R."/>
            <person name="Fowler J."/>
            <person name="Hinnebusch J."/>
            <person name="Marceau M."/>
            <person name="Medigue C."/>
            <person name="Simonet M."/>
            <person name="Chenal-Francisque V."/>
            <person name="Souza B."/>
            <person name="Dacheux D."/>
            <person name="Elliott J.M."/>
            <person name="Derbise A."/>
            <person name="Hauser L.J."/>
            <person name="Garcia E."/>
        </authorList>
    </citation>
    <scope>NUCLEOTIDE SEQUENCE [LARGE SCALE GENOMIC DNA]</scope>
    <source>
        <strain>IP32953</strain>
    </source>
</reference>
<protein>
    <recommendedName>
        <fullName evidence="1">Adenylate kinase</fullName>
        <shortName evidence="1">AK</shortName>
        <ecNumber evidence="1">2.7.4.3</ecNumber>
    </recommendedName>
    <alternativeName>
        <fullName evidence="1">ATP-AMP transphosphorylase</fullName>
    </alternativeName>
    <alternativeName>
        <fullName evidence="1">ATP:AMP phosphotransferase</fullName>
    </alternativeName>
    <alternativeName>
        <fullName evidence="1">Adenylate monophosphate kinase</fullName>
    </alternativeName>
</protein>
<name>KAD_YERPS</name>
<dbReference type="EC" id="2.7.4.3" evidence="1"/>
<dbReference type="EMBL" id="BX936398">
    <property type="protein sequence ID" value="CAH20236.1"/>
    <property type="molecule type" value="Genomic_DNA"/>
</dbReference>
<dbReference type="RefSeq" id="WP_002208600.1">
    <property type="nucleotide sequence ID" value="NZ_CP009712.1"/>
</dbReference>
<dbReference type="SMR" id="Q66DP7"/>
<dbReference type="GeneID" id="57975593"/>
<dbReference type="KEGG" id="ypo:BZ17_1552"/>
<dbReference type="KEGG" id="yps:YPTB0996"/>
<dbReference type="PATRIC" id="fig|273123.14.peg.1646"/>
<dbReference type="UniPathway" id="UPA00588">
    <property type="reaction ID" value="UER00649"/>
</dbReference>
<dbReference type="Proteomes" id="UP000001011">
    <property type="component" value="Chromosome"/>
</dbReference>
<dbReference type="GO" id="GO:0005737">
    <property type="term" value="C:cytoplasm"/>
    <property type="evidence" value="ECO:0007669"/>
    <property type="project" value="UniProtKB-SubCell"/>
</dbReference>
<dbReference type="GO" id="GO:0004017">
    <property type="term" value="F:adenylate kinase activity"/>
    <property type="evidence" value="ECO:0007669"/>
    <property type="project" value="UniProtKB-UniRule"/>
</dbReference>
<dbReference type="GO" id="GO:0005524">
    <property type="term" value="F:ATP binding"/>
    <property type="evidence" value="ECO:0007669"/>
    <property type="project" value="UniProtKB-UniRule"/>
</dbReference>
<dbReference type="GO" id="GO:0044209">
    <property type="term" value="P:AMP salvage"/>
    <property type="evidence" value="ECO:0007669"/>
    <property type="project" value="UniProtKB-UniRule"/>
</dbReference>
<dbReference type="CDD" id="cd01428">
    <property type="entry name" value="ADK"/>
    <property type="match status" value="1"/>
</dbReference>
<dbReference type="FunFam" id="3.40.50.300:FF:000106">
    <property type="entry name" value="Adenylate kinase mitochondrial"/>
    <property type="match status" value="1"/>
</dbReference>
<dbReference type="Gene3D" id="3.40.50.300">
    <property type="entry name" value="P-loop containing nucleotide triphosphate hydrolases"/>
    <property type="match status" value="1"/>
</dbReference>
<dbReference type="HAMAP" id="MF_00235">
    <property type="entry name" value="Adenylate_kinase_Adk"/>
    <property type="match status" value="1"/>
</dbReference>
<dbReference type="InterPro" id="IPR006259">
    <property type="entry name" value="Adenyl_kin_sub"/>
</dbReference>
<dbReference type="InterPro" id="IPR000850">
    <property type="entry name" value="Adenylat/UMP-CMP_kin"/>
</dbReference>
<dbReference type="InterPro" id="IPR033690">
    <property type="entry name" value="Adenylat_kinase_CS"/>
</dbReference>
<dbReference type="InterPro" id="IPR007862">
    <property type="entry name" value="Adenylate_kinase_lid-dom"/>
</dbReference>
<dbReference type="InterPro" id="IPR027417">
    <property type="entry name" value="P-loop_NTPase"/>
</dbReference>
<dbReference type="NCBIfam" id="TIGR01351">
    <property type="entry name" value="adk"/>
    <property type="match status" value="1"/>
</dbReference>
<dbReference type="NCBIfam" id="NF001379">
    <property type="entry name" value="PRK00279.1-1"/>
    <property type="match status" value="1"/>
</dbReference>
<dbReference type="NCBIfam" id="NF001380">
    <property type="entry name" value="PRK00279.1-2"/>
    <property type="match status" value="1"/>
</dbReference>
<dbReference type="NCBIfam" id="NF001381">
    <property type="entry name" value="PRK00279.1-3"/>
    <property type="match status" value="1"/>
</dbReference>
<dbReference type="NCBIfam" id="NF011100">
    <property type="entry name" value="PRK14527.1"/>
    <property type="match status" value="1"/>
</dbReference>
<dbReference type="PANTHER" id="PTHR23359">
    <property type="entry name" value="NUCLEOTIDE KINASE"/>
    <property type="match status" value="1"/>
</dbReference>
<dbReference type="Pfam" id="PF00406">
    <property type="entry name" value="ADK"/>
    <property type="match status" value="1"/>
</dbReference>
<dbReference type="Pfam" id="PF05191">
    <property type="entry name" value="ADK_lid"/>
    <property type="match status" value="1"/>
</dbReference>
<dbReference type="PRINTS" id="PR00094">
    <property type="entry name" value="ADENYLTKNASE"/>
</dbReference>
<dbReference type="SUPFAM" id="SSF52540">
    <property type="entry name" value="P-loop containing nucleoside triphosphate hydrolases"/>
    <property type="match status" value="1"/>
</dbReference>
<dbReference type="PROSITE" id="PS00113">
    <property type="entry name" value="ADENYLATE_KINASE"/>
    <property type="match status" value="1"/>
</dbReference>
<keyword id="KW-0067">ATP-binding</keyword>
<keyword id="KW-0963">Cytoplasm</keyword>
<keyword id="KW-0418">Kinase</keyword>
<keyword id="KW-0545">Nucleotide biosynthesis</keyword>
<keyword id="KW-0547">Nucleotide-binding</keyword>
<keyword id="KW-0808">Transferase</keyword>
<evidence type="ECO:0000255" key="1">
    <source>
        <dbReference type="HAMAP-Rule" id="MF_00235"/>
    </source>
</evidence>
<comment type="function">
    <text evidence="1">Catalyzes the reversible transfer of the terminal phosphate group between ATP and AMP. Plays an important role in cellular energy homeostasis and in adenine nucleotide metabolism.</text>
</comment>
<comment type="catalytic activity">
    <reaction evidence="1">
        <text>AMP + ATP = 2 ADP</text>
        <dbReference type="Rhea" id="RHEA:12973"/>
        <dbReference type="ChEBI" id="CHEBI:30616"/>
        <dbReference type="ChEBI" id="CHEBI:456215"/>
        <dbReference type="ChEBI" id="CHEBI:456216"/>
        <dbReference type="EC" id="2.7.4.3"/>
    </reaction>
</comment>
<comment type="pathway">
    <text evidence="1">Purine metabolism; AMP biosynthesis via salvage pathway; AMP from ADP: step 1/1.</text>
</comment>
<comment type="subunit">
    <text evidence="1">Monomer.</text>
</comment>
<comment type="subcellular location">
    <subcellularLocation>
        <location evidence="1">Cytoplasm</location>
    </subcellularLocation>
</comment>
<comment type="domain">
    <text evidence="1">Consists of three domains, a large central CORE domain and two small peripheral domains, NMPbind and LID, which undergo movements during catalysis. The LID domain closes over the site of phosphoryl transfer upon ATP binding. Assembling and dissambling the active center during each catalytic cycle provides an effective means to prevent ATP hydrolysis.</text>
</comment>
<comment type="similarity">
    <text evidence="1">Belongs to the adenylate kinase family.</text>
</comment>
<feature type="chain" id="PRO_0000158895" description="Adenylate kinase">
    <location>
        <begin position="1"/>
        <end position="214"/>
    </location>
</feature>
<feature type="region of interest" description="NMP" evidence="1">
    <location>
        <begin position="30"/>
        <end position="59"/>
    </location>
</feature>
<feature type="region of interest" description="LID">
    <location>
        <begin position="122"/>
        <end position="159"/>
    </location>
</feature>
<feature type="binding site" evidence="1">
    <location>
        <begin position="10"/>
        <end position="15"/>
    </location>
    <ligand>
        <name>ATP</name>
        <dbReference type="ChEBI" id="CHEBI:30616"/>
    </ligand>
</feature>
<feature type="binding site" evidence="1">
    <location>
        <position position="31"/>
    </location>
    <ligand>
        <name>AMP</name>
        <dbReference type="ChEBI" id="CHEBI:456215"/>
    </ligand>
</feature>
<feature type="binding site" evidence="1">
    <location>
        <position position="36"/>
    </location>
    <ligand>
        <name>AMP</name>
        <dbReference type="ChEBI" id="CHEBI:456215"/>
    </ligand>
</feature>
<feature type="binding site" evidence="1">
    <location>
        <begin position="57"/>
        <end position="59"/>
    </location>
    <ligand>
        <name>AMP</name>
        <dbReference type="ChEBI" id="CHEBI:456215"/>
    </ligand>
</feature>
<feature type="binding site" evidence="1">
    <location>
        <begin position="85"/>
        <end position="88"/>
    </location>
    <ligand>
        <name>AMP</name>
        <dbReference type="ChEBI" id="CHEBI:456215"/>
    </ligand>
</feature>
<feature type="binding site" evidence="1">
    <location>
        <position position="92"/>
    </location>
    <ligand>
        <name>AMP</name>
        <dbReference type="ChEBI" id="CHEBI:456215"/>
    </ligand>
</feature>
<feature type="binding site" evidence="1">
    <location>
        <position position="123"/>
    </location>
    <ligand>
        <name>ATP</name>
        <dbReference type="ChEBI" id="CHEBI:30616"/>
    </ligand>
</feature>
<feature type="binding site" evidence="1">
    <location>
        <begin position="132"/>
        <end position="133"/>
    </location>
    <ligand>
        <name>ATP</name>
        <dbReference type="ChEBI" id="CHEBI:30616"/>
    </ligand>
</feature>
<feature type="binding site" evidence="1">
    <location>
        <position position="156"/>
    </location>
    <ligand>
        <name>AMP</name>
        <dbReference type="ChEBI" id="CHEBI:456215"/>
    </ligand>
</feature>
<feature type="binding site" evidence="1">
    <location>
        <position position="167"/>
    </location>
    <ligand>
        <name>AMP</name>
        <dbReference type="ChEBI" id="CHEBI:456215"/>
    </ligand>
</feature>
<feature type="binding site" evidence="1">
    <location>
        <position position="200"/>
    </location>
    <ligand>
        <name>ATP</name>
        <dbReference type="ChEBI" id="CHEBI:30616"/>
    </ligand>
</feature>
<accession>Q66DP7</accession>
<proteinExistence type="inferred from homology"/>
<gene>
    <name evidence="1" type="primary">adk</name>
    <name type="ordered locus">YPTB0996</name>
</gene>
<sequence length="214" mass="23672">MRIILLGAPGAGKGTQAQFIMEKYGIPQISTGDMLRAAVKAGSELGLKAKEIMDAGKLVTDELVIALVKERITQEDCRDGFLLDGFPRTIPQADAMKEAGIKVDYVLEFDVPDELIVERIVGRRVHAASGRVYHVKFNPPKVEDKDDVTGEELTIRKDDQEATVRKRLIEYHQQTAPLVSYYHKEADAGNTQYFKLDGTRNVAEVSAELATILG</sequence>